<reference key="1">
    <citation type="journal article" date="2004" name="Nucleic Acids Res.">
        <title>Genome sequence of Symbiobacterium thermophilum, an uncultivable bacterium that depends on microbial commensalism.</title>
        <authorList>
            <person name="Ueda K."/>
            <person name="Yamashita A."/>
            <person name="Ishikawa J."/>
            <person name="Shimada M."/>
            <person name="Watsuji T."/>
            <person name="Morimura K."/>
            <person name="Ikeda H."/>
            <person name="Hattori M."/>
            <person name="Beppu T."/>
        </authorList>
    </citation>
    <scope>NUCLEOTIDE SEQUENCE [LARGE SCALE GENOMIC DNA]</scope>
    <source>
        <strain>DSM 24528 / JCM 14929 / IAM 14863 / T</strain>
    </source>
</reference>
<feature type="chain" id="PRO_0000269151" description="Small ribosomal subunit protein uS14">
    <location>
        <begin position="1"/>
        <end position="61"/>
    </location>
</feature>
<feature type="binding site" evidence="1">
    <location>
        <position position="24"/>
    </location>
    <ligand>
        <name>Zn(2+)</name>
        <dbReference type="ChEBI" id="CHEBI:29105"/>
    </ligand>
</feature>
<feature type="binding site" evidence="1">
    <location>
        <position position="27"/>
    </location>
    <ligand>
        <name>Zn(2+)</name>
        <dbReference type="ChEBI" id="CHEBI:29105"/>
    </ligand>
</feature>
<feature type="binding site" evidence="1">
    <location>
        <position position="40"/>
    </location>
    <ligand>
        <name>Zn(2+)</name>
        <dbReference type="ChEBI" id="CHEBI:29105"/>
    </ligand>
</feature>
<feature type="binding site" evidence="1">
    <location>
        <position position="43"/>
    </location>
    <ligand>
        <name>Zn(2+)</name>
        <dbReference type="ChEBI" id="CHEBI:29105"/>
    </ligand>
</feature>
<gene>
    <name evidence="1" type="primary">rpsZ</name>
    <name evidence="1" type="synonym">rpsN</name>
    <name type="ordered locus">STH3062</name>
</gene>
<sequence length="61" mass="7150">MAKTSLKVKAARPQKFKVRAYNRCKLCGRPRAYMRKFGLCRHCFRKLAHEGQIPGIRKASW</sequence>
<evidence type="ECO:0000255" key="1">
    <source>
        <dbReference type="HAMAP-Rule" id="MF_01364"/>
    </source>
</evidence>
<evidence type="ECO:0000305" key="2"/>
<dbReference type="EMBL" id="AP006840">
    <property type="protein sequence ID" value="BAD42044.1"/>
    <property type="molecule type" value="Genomic_DNA"/>
</dbReference>
<dbReference type="RefSeq" id="WP_011197177.1">
    <property type="nucleotide sequence ID" value="NC_006177.1"/>
</dbReference>
<dbReference type="SMR" id="Q67JV6"/>
<dbReference type="STRING" id="292459.STH3062"/>
<dbReference type="KEGG" id="sth:STH3062"/>
<dbReference type="eggNOG" id="COG0199">
    <property type="taxonomic scope" value="Bacteria"/>
</dbReference>
<dbReference type="HOGENOM" id="CLU_139869_3_0_9"/>
<dbReference type="OrthoDB" id="9810484at2"/>
<dbReference type="Proteomes" id="UP000000417">
    <property type="component" value="Chromosome"/>
</dbReference>
<dbReference type="GO" id="GO:0005737">
    <property type="term" value="C:cytoplasm"/>
    <property type="evidence" value="ECO:0007669"/>
    <property type="project" value="UniProtKB-ARBA"/>
</dbReference>
<dbReference type="GO" id="GO:0015935">
    <property type="term" value="C:small ribosomal subunit"/>
    <property type="evidence" value="ECO:0007669"/>
    <property type="project" value="TreeGrafter"/>
</dbReference>
<dbReference type="GO" id="GO:0019843">
    <property type="term" value="F:rRNA binding"/>
    <property type="evidence" value="ECO:0007669"/>
    <property type="project" value="UniProtKB-UniRule"/>
</dbReference>
<dbReference type="GO" id="GO:0003735">
    <property type="term" value="F:structural constituent of ribosome"/>
    <property type="evidence" value="ECO:0007669"/>
    <property type="project" value="InterPro"/>
</dbReference>
<dbReference type="GO" id="GO:0008270">
    <property type="term" value="F:zinc ion binding"/>
    <property type="evidence" value="ECO:0007669"/>
    <property type="project" value="UniProtKB-UniRule"/>
</dbReference>
<dbReference type="GO" id="GO:0006412">
    <property type="term" value="P:translation"/>
    <property type="evidence" value="ECO:0007669"/>
    <property type="project" value="UniProtKB-UniRule"/>
</dbReference>
<dbReference type="FunFam" id="4.10.830.10:FF:000001">
    <property type="entry name" value="30S ribosomal protein S14 type Z"/>
    <property type="match status" value="1"/>
</dbReference>
<dbReference type="Gene3D" id="4.10.830.10">
    <property type="entry name" value="30s Ribosomal Protein S14, Chain N"/>
    <property type="match status" value="1"/>
</dbReference>
<dbReference type="HAMAP" id="MF_01364_B">
    <property type="entry name" value="Ribosomal_uS14_2_B"/>
    <property type="match status" value="1"/>
</dbReference>
<dbReference type="InterPro" id="IPR001209">
    <property type="entry name" value="Ribosomal_uS14"/>
</dbReference>
<dbReference type="InterPro" id="IPR023053">
    <property type="entry name" value="Ribosomal_uS14_bact"/>
</dbReference>
<dbReference type="InterPro" id="IPR018271">
    <property type="entry name" value="Ribosomal_uS14_CS"/>
</dbReference>
<dbReference type="InterPro" id="IPR043140">
    <property type="entry name" value="Ribosomal_uS14_sf"/>
</dbReference>
<dbReference type="NCBIfam" id="NF005974">
    <property type="entry name" value="PRK08061.1"/>
    <property type="match status" value="1"/>
</dbReference>
<dbReference type="PANTHER" id="PTHR19836">
    <property type="entry name" value="30S RIBOSOMAL PROTEIN S14"/>
    <property type="match status" value="1"/>
</dbReference>
<dbReference type="PANTHER" id="PTHR19836:SF19">
    <property type="entry name" value="SMALL RIBOSOMAL SUBUNIT PROTEIN US14M"/>
    <property type="match status" value="1"/>
</dbReference>
<dbReference type="Pfam" id="PF00253">
    <property type="entry name" value="Ribosomal_S14"/>
    <property type="match status" value="1"/>
</dbReference>
<dbReference type="SUPFAM" id="SSF57716">
    <property type="entry name" value="Glucocorticoid receptor-like (DNA-binding domain)"/>
    <property type="match status" value="1"/>
</dbReference>
<dbReference type="PROSITE" id="PS00527">
    <property type="entry name" value="RIBOSOMAL_S14"/>
    <property type="match status" value="1"/>
</dbReference>
<protein>
    <recommendedName>
        <fullName evidence="1">Small ribosomal subunit protein uS14</fullName>
    </recommendedName>
    <alternativeName>
        <fullName evidence="2">30S ribosomal protein S14 type Z</fullName>
    </alternativeName>
</protein>
<name>RS14Z_SYMTH</name>
<organism>
    <name type="scientific">Symbiobacterium thermophilum (strain DSM 24528 / JCM 14929 / IAM 14863 / T)</name>
    <dbReference type="NCBI Taxonomy" id="292459"/>
    <lineage>
        <taxon>Bacteria</taxon>
        <taxon>Bacillati</taxon>
        <taxon>Bacillota</taxon>
        <taxon>Clostridia</taxon>
        <taxon>Eubacteriales</taxon>
        <taxon>Symbiobacteriaceae</taxon>
        <taxon>Symbiobacterium</taxon>
    </lineage>
</organism>
<proteinExistence type="inferred from homology"/>
<keyword id="KW-0479">Metal-binding</keyword>
<keyword id="KW-1185">Reference proteome</keyword>
<keyword id="KW-0687">Ribonucleoprotein</keyword>
<keyword id="KW-0689">Ribosomal protein</keyword>
<keyword id="KW-0694">RNA-binding</keyword>
<keyword id="KW-0699">rRNA-binding</keyword>
<keyword id="KW-0862">Zinc</keyword>
<accession>Q67JV6</accession>
<comment type="function">
    <text evidence="1">Binds 16S rRNA, required for the assembly of 30S particles and may also be responsible for determining the conformation of the 16S rRNA at the A site.</text>
</comment>
<comment type="cofactor">
    <cofactor evidence="1">
        <name>Zn(2+)</name>
        <dbReference type="ChEBI" id="CHEBI:29105"/>
    </cofactor>
    <text evidence="1">Binds 1 zinc ion per subunit.</text>
</comment>
<comment type="subunit">
    <text evidence="1">Part of the 30S ribosomal subunit. Contacts proteins S3 and S10.</text>
</comment>
<comment type="similarity">
    <text evidence="1">Belongs to the universal ribosomal protein uS14 family. Zinc-binding uS14 subfamily.</text>
</comment>